<name>NU5C_NUPAD</name>
<organism>
    <name type="scientific">Nuphar advena</name>
    <name type="common">Common spatterdock</name>
    <name type="synonym">Nuphar lutea subsp. advena</name>
    <dbReference type="NCBI Taxonomy" id="77108"/>
    <lineage>
        <taxon>Eukaryota</taxon>
        <taxon>Viridiplantae</taxon>
        <taxon>Streptophyta</taxon>
        <taxon>Embryophyta</taxon>
        <taxon>Tracheophyta</taxon>
        <taxon>Spermatophyta</taxon>
        <taxon>Magnoliopsida</taxon>
        <taxon>Nymphaeales</taxon>
        <taxon>Nymphaeaceae</taxon>
        <taxon>Nuphar</taxon>
    </lineage>
</organism>
<evidence type="ECO:0000250" key="1"/>
<evidence type="ECO:0000255" key="2"/>
<evidence type="ECO:0000305" key="3"/>
<sequence>MERTYQYAWIIPFVPLLVTMLIGLGLLLIPTATKNIRRIWAFPAVLLLSIVMVFSTKLAIQQINGSSIYEYLWSWSITSDFSLEFGYLIDPLTSIMSILITTVGIMVLIYSDNYMSHDQGYLRFFAYMSFFNTSMLGLVTSPNLIQIHIFWELVGMCSYLLIGFWFTRPIAANACQKAFVTNRVGDFGLLLGILGFYLITGSFEFQDLFEIFNDSIINNNEINSSFATLCAFLLFLGAVAKSAQFPLHVWLPDAMEGPTPISALIHAATMVAAGIFLVARLLPLFIGIPYIMNIISLIGLITVLLGATLALAQRDIKRSLAYSTMSQLGYIMLALGIGSYRAALFHLITHAYSKALLFLGSGSIIHSMEPIVGYSPAKSQNMVLMGGLTKYMPITKTTFFLGTLSLCGIPPLACFWSKDEIINDSWLYSPIFATIACYTAGLTAFYMFRMYLLTFEGHLRSNFKNYSGHTNSSFYSISIWGQEGSKPVSSNLLLATRNNNDKSSFSSCPFSNTYKIAGYVRNMRSSFSTHFLNKDPYTLLYPHESDNTMLFPLLILAIFTLFVGCIGIRFGQEVMEVDILSKWLTPSMKLLHQNSTEDWYKFVTNAFYSVSIAYFGIFIASVLYGSVYSDRQNLYLINSFAKMGPKMRIRLEQIINVIYNWSYNRGYIDVYYEKVFIRGIRGLAQLAHSFDRRVIDGVTNGVGVASFFLGEGIKYIGGGRISSYLFLYLACVSIVLLLVK</sequence>
<protein>
    <recommendedName>
        <fullName>NAD(P)H-quinone oxidoreductase subunit 5, chloroplastic</fullName>
        <ecNumber>7.1.1.-</ecNumber>
    </recommendedName>
    <alternativeName>
        <fullName>NAD(P)H dehydrogenase subunit 5</fullName>
    </alternativeName>
    <alternativeName>
        <fullName>NADH-plastoquinone oxidoreductase subunit 5</fullName>
    </alternativeName>
</protein>
<accession>A1XG02</accession>
<comment type="function">
    <text evidence="1">NDH shuttles electrons from NAD(P)H:plastoquinone, via FMN and iron-sulfur (Fe-S) centers, to quinones in the photosynthetic chain and possibly in a chloroplast respiratory chain. The immediate electron acceptor for the enzyme in this species is believed to be plastoquinone. Couples the redox reaction to proton translocation, and thus conserves the redox energy in a proton gradient (By similarity).</text>
</comment>
<comment type="catalytic activity">
    <reaction>
        <text>a plastoquinone + NADH + (n+1) H(+)(in) = a plastoquinol + NAD(+) + n H(+)(out)</text>
        <dbReference type="Rhea" id="RHEA:42608"/>
        <dbReference type="Rhea" id="RHEA-COMP:9561"/>
        <dbReference type="Rhea" id="RHEA-COMP:9562"/>
        <dbReference type="ChEBI" id="CHEBI:15378"/>
        <dbReference type="ChEBI" id="CHEBI:17757"/>
        <dbReference type="ChEBI" id="CHEBI:57540"/>
        <dbReference type="ChEBI" id="CHEBI:57945"/>
        <dbReference type="ChEBI" id="CHEBI:62192"/>
    </reaction>
</comment>
<comment type="catalytic activity">
    <reaction>
        <text>a plastoquinone + NADPH + (n+1) H(+)(in) = a plastoquinol + NADP(+) + n H(+)(out)</text>
        <dbReference type="Rhea" id="RHEA:42612"/>
        <dbReference type="Rhea" id="RHEA-COMP:9561"/>
        <dbReference type="Rhea" id="RHEA-COMP:9562"/>
        <dbReference type="ChEBI" id="CHEBI:15378"/>
        <dbReference type="ChEBI" id="CHEBI:17757"/>
        <dbReference type="ChEBI" id="CHEBI:57783"/>
        <dbReference type="ChEBI" id="CHEBI:58349"/>
        <dbReference type="ChEBI" id="CHEBI:62192"/>
    </reaction>
</comment>
<comment type="subunit">
    <text evidence="1">NDH is composed of at least 16 different subunits, 5 of which are encoded in the nucleus.</text>
</comment>
<comment type="subcellular location">
    <subcellularLocation>
        <location evidence="1">Plastid</location>
        <location evidence="1">Chloroplast thylakoid membrane</location>
        <topology evidence="1">Multi-pass membrane protein</topology>
    </subcellularLocation>
</comment>
<comment type="similarity">
    <text evidence="3">Belongs to the complex I subunit 5 family.</text>
</comment>
<gene>
    <name type="primary">ndhF</name>
</gene>
<reference key="1">
    <citation type="journal article" date="2007" name="BMC Genomics">
        <title>Comparative chloroplast genomics: analyses including new sequences from the angiosperms Nuphar advena and Ranunculus macranthus.</title>
        <authorList>
            <person name="Raubeson L.A."/>
            <person name="Peery R."/>
            <person name="Chumley T.W."/>
            <person name="Dziubek C."/>
            <person name="Fourcade H.M."/>
            <person name="Boore J.L."/>
            <person name="Jansen R.K."/>
        </authorList>
    </citation>
    <scope>NUCLEOTIDE SEQUENCE [LARGE SCALE GENOMIC DNA]</scope>
</reference>
<proteinExistence type="inferred from homology"/>
<feature type="chain" id="PRO_0000360955" description="NAD(P)H-quinone oxidoreductase subunit 5, chloroplastic">
    <location>
        <begin position="1"/>
        <end position="740"/>
    </location>
</feature>
<feature type="transmembrane region" description="Helical" evidence="2">
    <location>
        <begin position="9"/>
        <end position="29"/>
    </location>
</feature>
<feature type="transmembrane region" description="Helical" evidence="2">
    <location>
        <begin position="39"/>
        <end position="59"/>
    </location>
</feature>
<feature type="transmembrane region" description="Helical" evidence="2">
    <location>
        <begin position="89"/>
        <end position="109"/>
    </location>
</feature>
<feature type="transmembrane region" description="Helical" evidence="2">
    <location>
        <begin position="125"/>
        <end position="145"/>
    </location>
</feature>
<feature type="transmembrane region" description="Helical" evidence="2">
    <location>
        <begin position="147"/>
        <end position="167"/>
    </location>
</feature>
<feature type="transmembrane region" description="Helical" evidence="2">
    <location>
        <begin position="185"/>
        <end position="205"/>
    </location>
</feature>
<feature type="transmembrane region" description="Helical" evidence="2">
    <location>
        <begin position="231"/>
        <end position="251"/>
    </location>
</feature>
<feature type="transmembrane region" description="Helical" evidence="2">
    <location>
        <begin position="259"/>
        <end position="279"/>
    </location>
</feature>
<feature type="transmembrane region" description="Helical" evidence="2">
    <location>
        <begin position="281"/>
        <end position="301"/>
    </location>
</feature>
<feature type="transmembrane region" description="Helical" evidence="2">
    <location>
        <begin position="328"/>
        <end position="348"/>
    </location>
</feature>
<feature type="transmembrane region" description="Helical" evidence="2">
    <location>
        <begin position="355"/>
        <end position="375"/>
    </location>
</feature>
<feature type="transmembrane region" description="Helical" evidence="2">
    <location>
        <begin position="397"/>
        <end position="417"/>
    </location>
</feature>
<feature type="transmembrane region" description="Helical" evidence="2">
    <location>
        <begin position="426"/>
        <end position="446"/>
    </location>
</feature>
<feature type="transmembrane region" description="Helical" evidence="2">
    <location>
        <begin position="548"/>
        <end position="568"/>
    </location>
</feature>
<feature type="transmembrane region" description="Helical" evidence="2">
    <location>
        <begin position="607"/>
        <end position="627"/>
    </location>
</feature>
<feature type="transmembrane region" description="Helical" evidence="2">
    <location>
        <begin position="719"/>
        <end position="739"/>
    </location>
</feature>
<keyword id="KW-0150">Chloroplast</keyword>
<keyword id="KW-0472">Membrane</keyword>
<keyword id="KW-0520">NAD</keyword>
<keyword id="KW-0521">NADP</keyword>
<keyword id="KW-0934">Plastid</keyword>
<keyword id="KW-0618">Plastoquinone</keyword>
<keyword id="KW-0874">Quinone</keyword>
<keyword id="KW-0793">Thylakoid</keyword>
<keyword id="KW-1278">Translocase</keyword>
<keyword id="KW-0812">Transmembrane</keyword>
<keyword id="KW-1133">Transmembrane helix</keyword>
<keyword id="KW-0813">Transport</keyword>
<geneLocation type="chloroplast"/>
<dbReference type="EC" id="7.1.1.-"/>
<dbReference type="EMBL" id="DQ354691">
    <property type="protein sequence ID" value="ABC60506.2"/>
    <property type="molecule type" value="Genomic_DNA"/>
</dbReference>
<dbReference type="RefSeq" id="YP_001001581.2">
    <property type="nucleotide sequence ID" value="NC_008788.1"/>
</dbReference>
<dbReference type="SMR" id="A1XG02"/>
<dbReference type="GeneID" id="4699584"/>
<dbReference type="GO" id="GO:0009535">
    <property type="term" value="C:chloroplast thylakoid membrane"/>
    <property type="evidence" value="ECO:0007669"/>
    <property type="project" value="UniProtKB-SubCell"/>
</dbReference>
<dbReference type="GO" id="GO:0008137">
    <property type="term" value="F:NADH dehydrogenase (ubiquinone) activity"/>
    <property type="evidence" value="ECO:0007669"/>
    <property type="project" value="InterPro"/>
</dbReference>
<dbReference type="GO" id="GO:0048038">
    <property type="term" value="F:quinone binding"/>
    <property type="evidence" value="ECO:0007669"/>
    <property type="project" value="UniProtKB-KW"/>
</dbReference>
<dbReference type="GO" id="GO:0042773">
    <property type="term" value="P:ATP synthesis coupled electron transport"/>
    <property type="evidence" value="ECO:0007669"/>
    <property type="project" value="InterPro"/>
</dbReference>
<dbReference type="GO" id="GO:0015990">
    <property type="term" value="P:electron transport coupled proton transport"/>
    <property type="evidence" value="ECO:0007669"/>
    <property type="project" value="TreeGrafter"/>
</dbReference>
<dbReference type="Gene3D" id="1.20.5.2700">
    <property type="match status" value="1"/>
</dbReference>
<dbReference type="InterPro" id="IPR002128">
    <property type="entry name" value="NADH_UbQ_OxRdtase_chlpt_su5_C"/>
</dbReference>
<dbReference type="InterPro" id="IPR018393">
    <property type="entry name" value="NADHpl_OxRdtase_5_subgr"/>
</dbReference>
<dbReference type="InterPro" id="IPR001750">
    <property type="entry name" value="ND/Mrp_TM"/>
</dbReference>
<dbReference type="InterPro" id="IPR003945">
    <property type="entry name" value="NU5C-like"/>
</dbReference>
<dbReference type="InterPro" id="IPR001516">
    <property type="entry name" value="Proton_antipo_N"/>
</dbReference>
<dbReference type="NCBIfam" id="TIGR01974">
    <property type="entry name" value="NDH_I_L"/>
    <property type="match status" value="1"/>
</dbReference>
<dbReference type="NCBIfam" id="NF005141">
    <property type="entry name" value="PRK06590.1"/>
    <property type="match status" value="1"/>
</dbReference>
<dbReference type="PANTHER" id="PTHR42829">
    <property type="entry name" value="NADH-UBIQUINONE OXIDOREDUCTASE CHAIN 5"/>
    <property type="match status" value="1"/>
</dbReference>
<dbReference type="PANTHER" id="PTHR42829:SF2">
    <property type="entry name" value="NADH-UBIQUINONE OXIDOREDUCTASE CHAIN 5"/>
    <property type="match status" value="1"/>
</dbReference>
<dbReference type="Pfam" id="PF01010">
    <property type="entry name" value="Proton_antipo_C"/>
    <property type="match status" value="1"/>
</dbReference>
<dbReference type="Pfam" id="PF00361">
    <property type="entry name" value="Proton_antipo_M"/>
    <property type="match status" value="1"/>
</dbReference>
<dbReference type="Pfam" id="PF00662">
    <property type="entry name" value="Proton_antipo_N"/>
    <property type="match status" value="1"/>
</dbReference>
<dbReference type="PRINTS" id="PR01434">
    <property type="entry name" value="NADHDHGNASE5"/>
</dbReference>
<dbReference type="PRINTS" id="PR01435">
    <property type="entry name" value="NPOXDRDTASE5"/>
</dbReference>